<protein>
    <recommendedName>
        <fullName>UPF0758 protein MGAS10750_Spy0991</fullName>
    </recommendedName>
</protein>
<evidence type="ECO:0000255" key="1">
    <source>
        <dbReference type="PROSITE-ProRule" id="PRU01182"/>
    </source>
</evidence>
<evidence type="ECO:0000305" key="2"/>
<gene>
    <name type="ordered locus">MGAS10750_Spy0991</name>
</gene>
<accession>Q1J6P2</accession>
<comment type="similarity">
    <text evidence="2">Belongs to the UPF0758 family.</text>
</comment>
<feature type="chain" id="PRO_1000089861" description="UPF0758 protein MGAS10750_Spy0991">
    <location>
        <begin position="1"/>
        <end position="226"/>
    </location>
</feature>
<feature type="domain" description="MPN" evidence="1">
    <location>
        <begin position="103"/>
        <end position="225"/>
    </location>
</feature>
<feature type="short sequence motif" description="JAMM motif" evidence="1">
    <location>
        <begin position="174"/>
        <end position="187"/>
    </location>
</feature>
<feature type="binding site" evidence="1">
    <location>
        <position position="174"/>
    </location>
    <ligand>
        <name>Zn(2+)</name>
        <dbReference type="ChEBI" id="CHEBI:29105"/>
        <note>catalytic</note>
    </ligand>
</feature>
<feature type="binding site" evidence="1">
    <location>
        <position position="176"/>
    </location>
    <ligand>
        <name>Zn(2+)</name>
        <dbReference type="ChEBI" id="CHEBI:29105"/>
        <note>catalytic</note>
    </ligand>
</feature>
<feature type="binding site" evidence="1">
    <location>
        <position position="187"/>
    </location>
    <ligand>
        <name>Zn(2+)</name>
        <dbReference type="ChEBI" id="CHEBI:29105"/>
        <note>catalytic</note>
    </ligand>
</feature>
<sequence>MYSIKCDDNKAMPRERLMRLGAESLSNQELLAILLRTGNKEKHVLELSSYLLSHLDSLADFKKMSLQELQHLAGIGKVKAIEIKAMIELVSRILATDKTLTDSVLTSVQVAEKMMAALGDKKQEHLVVLYLDNQNRIIEEKTIFIGTVRRSLAEPREILYYACKNMATSLIVIHNHPSGNIEPSSNDYCFTEKIKRSCEDLGIICLDHIIVSYKDYYSFREKSTLF</sequence>
<dbReference type="EMBL" id="CP000262">
    <property type="protein sequence ID" value="ABF37941.1"/>
    <property type="molecule type" value="Genomic_DNA"/>
</dbReference>
<dbReference type="SMR" id="Q1J6P2"/>
<dbReference type="KEGG" id="spi:MGAS10750_Spy0991"/>
<dbReference type="HOGENOM" id="CLU_073529_0_2_9"/>
<dbReference type="Proteomes" id="UP000002434">
    <property type="component" value="Chromosome"/>
</dbReference>
<dbReference type="GO" id="GO:0046872">
    <property type="term" value="F:metal ion binding"/>
    <property type="evidence" value="ECO:0007669"/>
    <property type="project" value="UniProtKB-KW"/>
</dbReference>
<dbReference type="GO" id="GO:0008237">
    <property type="term" value="F:metallopeptidase activity"/>
    <property type="evidence" value="ECO:0007669"/>
    <property type="project" value="UniProtKB-KW"/>
</dbReference>
<dbReference type="GO" id="GO:0006508">
    <property type="term" value="P:proteolysis"/>
    <property type="evidence" value="ECO:0007669"/>
    <property type="project" value="UniProtKB-KW"/>
</dbReference>
<dbReference type="CDD" id="cd08071">
    <property type="entry name" value="MPN_DUF2466"/>
    <property type="match status" value="1"/>
</dbReference>
<dbReference type="Gene3D" id="3.40.140.10">
    <property type="entry name" value="Cytidine Deaminase, domain 2"/>
    <property type="match status" value="1"/>
</dbReference>
<dbReference type="InterPro" id="IPR037518">
    <property type="entry name" value="MPN"/>
</dbReference>
<dbReference type="InterPro" id="IPR025657">
    <property type="entry name" value="RadC_JAB"/>
</dbReference>
<dbReference type="InterPro" id="IPR010994">
    <property type="entry name" value="RuvA_2-like"/>
</dbReference>
<dbReference type="InterPro" id="IPR001405">
    <property type="entry name" value="UPF0758"/>
</dbReference>
<dbReference type="InterPro" id="IPR020891">
    <property type="entry name" value="UPF0758_CS"/>
</dbReference>
<dbReference type="InterPro" id="IPR046778">
    <property type="entry name" value="UPF0758_N"/>
</dbReference>
<dbReference type="NCBIfam" id="NF000642">
    <property type="entry name" value="PRK00024.1"/>
    <property type="match status" value="1"/>
</dbReference>
<dbReference type="NCBIfam" id="TIGR00608">
    <property type="entry name" value="radc"/>
    <property type="match status" value="1"/>
</dbReference>
<dbReference type="PANTHER" id="PTHR30471">
    <property type="entry name" value="DNA REPAIR PROTEIN RADC"/>
    <property type="match status" value="1"/>
</dbReference>
<dbReference type="PANTHER" id="PTHR30471:SF3">
    <property type="entry name" value="UPF0758 PROTEIN YEES-RELATED"/>
    <property type="match status" value="1"/>
</dbReference>
<dbReference type="Pfam" id="PF04002">
    <property type="entry name" value="RadC"/>
    <property type="match status" value="1"/>
</dbReference>
<dbReference type="Pfam" id="PF20582">
    <property type="entry name" value="UPF0758_N"/>
    <property type="match status" value="1"/>
</dbReference>
<dbReference type="SUPFAM" id="SSF47781">
    <property type="entry name" value="RuvA domain 2-like"/>
    <property type="match status" value="1"/>
</dbReference>
<dbReference type="PROSITE" id="PS50249">
    <property type="entry name" value="MPN"/>
    <property type="match status" value="1"/>
</dbReference>
<dbReference type="PROSITE" id="PS01302">
    <property type="entry name" value="UPF0758"/>
    <property type="match status" value="1"/>
</dbReference>
<keyword id="KW-0378">Hydrolase</keyword>
<keyword id="KW-0479">Metal-binding</keyword>
<keyword id="KW-0482">Metalloprotease</keyword>
<keyword id="KW-0645">Protease</keyword>
<keyword id="KW-0862">Zinc</keyword>
<name>Y991_STRPF</name>
<organism>
    <name type="scientific">Streptococcus pyogenes serotype M4 (strain MGAS10750)</name>
    <dbReference type="NCBI Taxonomy" id="370554"/>
    <lineage>
        <taxon>Bacteria</taxon>
        <taxon>Bacillati</taxon>
        <taxon>Bacillota</taxon>
        <taxon>Bacilli</taxon>
        <taxon>Lactobacillales</taxon>
        <taxon>Streptococcaceae</taxon>
        <taxon>Streptococcus</taxon>
    </lineage>
</organism>
<proteinExistence type="inferred from homology"/>
<reference key="1">
    <citation type="journal article" date="2006" name="Proc. Natl. Acad. Sci. U.S.A.">
        <title>Molecular genetic anatomy of inter- and intraserotype variation in the human bacterial pathogen group A Streptococcus.</title>
        <authorList>
            <person name="Beres S.B."/>
            <person name="Richter E.W."/>
            <person name="Nagiec M.J."/>
            <person name="Sumby P."/>
            <person name="Porcella S.F."/>
            <person name="DeLeo F.R."/>
            <person name="Musser J.M."/>
        </authorList>
    </citation>
    <scope>NUCLEOTIDE SEQUENCE [LARGE SCALE GENOMIC DNA]</scope>
    <source>
        <strain>MGAS10750</strain>
    </source>
</reference>